<dbReference type="EMBL" id="V00657">
    <property type="protein sequence ID" value="CAA24011.1"/>
    <property type="molecule type" value="Genomic_DNA"/>
</dbReference>
<dbReference type="EMBL" id="V00657">
    <property type="protein sequence ID" value="CAA24012.1"/>
    <property type="status" value="ALT_INIT"/>
    <property type="molecule type" value="Genomic_DNA"/>
</dbReference>
<dbReference type="EMBL" id="M10636">
    <property type="protein sequence ID" value="AAA32313.1"/>
    <property type="molecule type" value="Genomic_DNA"/>
</dbReference>
<dbReference type="PIR" id="A04240">
    <property type="entry name" value="ZABPG4"/>
</dbReference>
<dbReference type="SMR" id="P03632"/>
<dbReference type="Proteomes" id="UP000002140">
    <property type="component" value="Segment"/>
</dbReference>
<dbReference type="GO" id="GO:0003677">
    <property type="term" value="F:DNA binding"/>
    <property type="evidence" value="ECO:0007669"/>
    <property type="project" value="UniProtKB-KW"/>
</dbReference>
<dbReference type="GO" id="GO:0004519">
    <property type="term" value="F:endonuclease activity"/>
    <property type="evidence" value="ECO:0007669"/>
    <property type="project" value="UniProtKB-KW"/>
</dbReference>
<dbReference type="GO" id="GO:0008270">
    <property type="term" value="F:zinc ion binding"/>
    <property type="evidence" value="ECO:0007669"/>
    <property type="project" value="UniProtKB-KW"/>
</dbReference>
<dbReference type="GO" id="GO:0006260">
    <property type="term" value="P:DNA replication"/>
    <property type="evidence" value="ECO:0007669"/>
    <property type="project" value="UniProtKB-KW"/>
</dbReference>
<dbReference type="GO" id="GO:0039693">
    <property type="term" value="P:viral DNA genome replication"/>
    <property type="evidence" value="ECO:0007669"/>
    <property type="project" value="UniProtKB-KW"/>
</dbReference>
<dbReference type="InterPro" id="IPR008766">
    <property type="entry name" value="Replication_gene_A-like"/>
</dbReference>
<dbReference type="Pfam" id="PF05840">
    <property type="entry name" value="Phage_GPA"/>
    <property type="match status" value="1"/>
</dbReference>
<sequence length="554" mass="63382">MFKVHSDYFSKPNIDAIKPLVETAGMSVLTQSPNLRIWKQCNTRIKLLEEILAHYTNGIRRDDNGDFWMNPNSQLATTIAYRAHHKGHNPKFKQYPETFTLDDIITGKPIPQTAPDELQLSDEIVEDYRLTVLSIIEELQECYDVLGQLDINNTIDHKPLGNDHWNLLYEKPVYKHWYQLVSNRPLKDIRADYNYAKAKGVKDECSKILEESTMKSRRGFTVQRLMNAMRTAHSKGWYVVFDTLTLADDRLKDFYDNPNALRDYFRDIGRMVLTAEGRSVHDSSSDCYQYFCVPEYGTQHGRLHFHAVHLMRTLPLGSLDPNFGKLVRINRQINSLQNTWPYGYSMPIAVRYSQDAFSRAGWLWPVDSKGEPLKATSYMAVGFYVAKYVNKKSDIDMAVKGLGNKEWNNSLKTKINLIPKKVFRIRMSRNFGMKLLSMAHLSAETLMELTQVGYDVTPFNNILKQNAKKELKSRLAKKSVADVLEAQPVTTNLLKFMRNLTRTIGASNLQSFIASMTTKLTSTDISDETKNYVASAGIAVANLRIKSKWTAGGK</sequence>
<comment type="function">
    <text>The A protein is a specific endonuclease that cleaves the viral strand of supertwisted, closed circular DNA at a unique site in the A gene. The A protein also causes relaxation of supertwisted DNA and forms a complex with viral DNA that has a discontinuity in gene A of the viral strand.</text>
</comment>
<comment type="function">
    <text>The A* protein binds to double-stranded DNA and prevents their hydrolysis by nucleases.</text>
</comment>
<comment type="alternative products">
    <event type="alternative initiation"/>
    <isoform>
        <id>P03632-1</id>
        <name>A</name>
        <sequence type="displayed"/>
    </isoform>
    <isoform>
        <id>P03632-2</id>
        <name>A*</name>
        <sequence type="described" ref="VSP_018963"/>
    </isoform>
</comment>
<comment type="sequence caution" evidence="3">
    <conflict type="erroneous initiation">
        <sequence resource="EMBL-CDS" id="CAA24012"/>
    </conflict>
</comment>
<organism>
    <name type="scientific">Escherichia phage G4</name>
    <name type="common">Bacteriophage G4</name>
    <dbReference type="NCBI Taxonomy" id="10843"/>
    <lineage>
        <taxon>Viruses</taxon>
        <taxon>Monodnaviria</taxon>
        <taxon>Sangervirae</taxon>
        <taxon>Phixviricota</taxon>
        <taxon>Malgrandaviricetes</taxon>
        <taxon>Petitvirales</taxon>
        <taxon>Microviridae</taxon>
        <taxon>Bullavirinae</taxon>
        <taxon>Gequatrovirus</taxon>
        <taxon>Gequatrovirus G4</taxon>
    </lineage>
</organism>
<feature type="chain" id="PRO_0000003315" description="A protein">
    <location>
        <begin position="1"/>
        <end position="554"/>
    </location>
</feature>
<feature type="zinc finger region" evidence="2">
    <location>
        <begin position="287"/>
        <end position="309"/>
    </location>
</feature>
<feature type="active site" description="O-(5'-phospho-DNA)-tyrosine intermediate" evidence="1">
    <location>
        <position position="384"/>
    </location>
</feature>
<feature type="active site" description="O-(5'-phospho-DNA)-tyrosine intermediate" evidence="1">
    <location>
        <position position="388"/>
    </location>
</feature>
<feature type="splice variant" id="VSP_018963" description="In isoform A*." evidence="3">
    <location>
        <begin position="1"/>
        <end position="213"/>
    </location>
</feature>
<feature type="sequence conflict" description="In Ref. 1; CAA24011/CAA24012." evidence="3" ref="1">
    <original>D</original>
    <variation>H</variation>
    <location>
        <position position="320"/>
    </location>
</feature>
<organismHost>
    <name type="scientific">Escherichia coli</name>
    <dbReference type="NCBI Taxonomy" id="562"/>
</organismHost>
<proteinExistence type="predicted"/>
<gene>
    <name type="primary">A</name>
</gene>
<keyword id="KW-0024">Alternative initiation</keyword>
<keyword id="KW-0235">DNA replication</keyword>
<keyword id="KW-0238">DNA-binding</keyword>
<keyword id="KW-0255">Endonuclease</keyword>
<keyword id="KW-0378">Hydrolase</keyword>
<keyword id="KW-0479">Metal-binding</keyword>
<keyword id="KW-0540">Nuclease</keyword>
<keyword id="KW-1185">Reference proteome</keyword>
<keyword id="KW-1194">Viral DNA replication</keyword>
<keyword id="KW-0862">Zinc</keyword>
<keyword id="KW-0863">Zinc-finger</keyword>
<protein>
    <recommendedName>
        <fullName>A protein</fullName>
    </recommendedName>
    <alternativeName>
        <fullName>GPA</fullName>
    </alternativeName>
</protein>
<name>VGA_BPG4</name>
<evidence type="ECO:0000250" key="1"/>
<evidence type="ECO:0000255" key="2"/>
<evidence type="ECO:0000305" key="3"/>
<reference key="1">
    <citation type="journal article" date="1978" name="Nature">
        <title>Nucleotide sequence of bacteriophage G4 DNA.</title>
        <authorList>
            <person name="Godson G.N."/>
            <person name="Barrell B.G."/>
            <person name="Staden R."/>
            <person name="Fiddes J.C."/>
        </authorList>
    </citation>
    <scope>NUCLEOTIDE SEQUENCE [GENOMIC DNA]</scope>
</reference>
<reference key="2">
    <citation type="journal article" date="1979" name="J. Mol. Biol.">
        <title>Evolution of the three overlapping gene systems in G4 and phi X174.</title>
        <authorList>
            <person name="Fiddes J.C."/>
            <person name="Godson G.N."/>
        </authorList>
    </citation>
    <scope>NUCLEOTIDE SEQUENCE [GENOMIC DNA] OF 402-526</scope>
</reference>
<accession>P03632</accession>
<accession>Q38365</accession>